<name>MATK_THRSA</name>
<feature type="chain" id="PRO_0000143734" description="Maturase K">
    <location>
        <begin position="1"/>
        <end position="503"/>
    </location>
</feature>
<sequence>MEEFQGYLEVDRSQQHDLLYPLLFREYIYALAHDHGLNRSILFENAGYDNKSSSIIVKRLITRMYQQNRLIFSSKDSIQNQFIGHNKNLYSQIISEGFAVIVEIPFSLRLVFSLERKEMAKSHNLRSIHSIFPFLEDKFTHLDYVSDVLIPYYIHLEILVQTLRYWVKDSSSLHLLRFFLHEYCNSLITPKKHITFFSKGNPRLFLFLYNSHICEYEYIFLFLRNQSSHLRSTSSGIFFERIYFYVKIEHFFKVFFDNNFQCTLWFFKDPFMHYVRYQGKFFLASKDTSLRMNKWKYYLVNLWQYHFYAWFKPGRIDINQLFKYSLDFLGYRSNVRLNSSVVRSQMLZNLFLINNAMKKFETIVPIIPLIGSLYKANFCNTFGHPISKPTRTDSSDSDIIDRFLRICRNLSHYHSGSSKKKSLYRVKYILRLSCVXXXXXXXXXTVRTFVKRLGSEFLEEFLTEEEVVLSLIFPRTYSTSRRLYRGHIWYLDITSINDLVNYE</sequence>
<comment type="function">
    <text evidence="1">Usually encoded in the trnK tRNA gene intron. Probably assists in splicing its own and other chloroplast group II introns.</text>
</comment>
<comment type="subcellular location">
    <subcellularLocation>
        <location>Plastid</location>
        <location>Chloroplast</location>
    </subcellularLocation>
</comment>
<comment type="similarity">
    <text evidence="1">Belongs to the intron maturase 2 family. MatK subfamily.</text>
</comment>
<organism>
    <name type="scientific">Thryptomene saxicola</name>
    <name type="common">Rock thryptomene</name>
    <name type="synonym">Baeckea saxicola</name>
    <dbReference type="NCBI Taxonomy" id="106071"/>
    <lineage>
        <taxon>Eukaryota</taxon>
        <taxon>Viridiplantae</taxon>
        <taxon>Streptophyta</taxon>
        <taxon>Embryophyta</taxon>
        <taxon>Tracheophyta</taxon>
        <taxon>Spermatophyta</taxon>
        <taxon>Magnoliopsida</taxon>
        <taxon>eudicotyledons</taxon>
        <taxon>Gunneridae</taxon>
        <taxon>Pentapetalae</taxon>
        <taxon>rosids</taxon>
        <taxon>malvids</taxon>
        <taxon>Myrtales</taxon>
        <taxon>Myrtaceae</taxon>
        <taxon>Myrtoideae</taxon>
        <taxon>Chamelaucieae</taxon>
        <taxon>Thryptomene</taxon>
    </lineage>
</organism>
<proteinExistence type="inferred from homology"/>
<accession>Q9TKD3</accession>
<keyword id="KW-0150">Chloroplast</keyword>
<keyword id="KW-0507">mRNA processing</keyword>
<keyword id="KW-0934">Plastid</keyword>
<keyword id="KW-0694">RNA-binding</keyword>
<keyword id="KW-0819">tRNA processing</keyword>
<protein>
    <recommendedName>
        <fullName evidence="1">Maturase K</fullName>
    </recommendedName>
    <alternativeName>
        <fullName evidence="1">Intron maturase</fullName>
    </alternativeName>
</protein>
<evidence type="ECO:0000255" key="1">
    <source>
        <dbReference type="HAMAP-Rule" id="MF_01390"/>
    </source>
</evidence>
<dbReference type="EMBL" id="AF184709">
    <property type="protein sequence ID" value="AAF03877.2"/>
    <property type="molecule type" value="Genomic_DNA"/>
</dbReference>
<dbReference type="GO" id="GO:0009507">
    <property type="term" value="C:chloroplast"/>
    <property type="evidence" value="ECO:0007669"/>
    <property type="project" value="UniProtKB-SubCell"/>
</dbReference>
<dbReference type="GO" id="GO:0003723">
    <property type="term" value="F:RNA binding"/>
    <property type="evidence" value="ECO:0007669"/>
    <property type="project" value="UniProtKB-KW"/>
</dbReference>
<dbReference type="GO" id="GO:0006397">
    <property type="term" value="P:mRNA processing"/>
    <property type="evidence" value="ECO:0007669"/>
    <property type="project" value="UniProtKB-KW"/>
</dbReference>
<dbReference type="GO" id="GO:0008380">
    <property type="term" value="P:RNA splicing"/>
    <property type="evidence" value="ECO:0007669"/>
    <property type="project" value="UniProtKB-UniRule"/>
</dbReference>
<dbReference type="GO" id="GO:0008033">
    <property type="term" value="P:tRNA processing"/>
    <property type="evidence" value="ECO:0007669"/>
    <property type="project" value="UniProtKB-KW"/>
</dbReference>
<dbReference type="HAMAP" id="MF_01390">
    <property type="entry name" value="MatK"/>
    <property type="match status" value="1"/>
</dbReference>
<dbReference type="InterPro" id="IPR024937">
    <property type="entry name" value="Domain_X"/>
</dbReference>
<dbReference type="InterPro" id="IPR002866">
    <property type="entry name" value="Maturase_MatK"/>
</dbReference>
<dbReference type="InterPro" id="IPR024942">
    <property type="entry name" value="Maturase_MatK_N"/>
</dbReference>
<dbReference type="PANTHER" id="PTHR34811">
    <property type="entry name" value="MATURASE K"/>
    <property type="match status" value="1"/>
</dbReference>
<dbReference type="PANTHER" id="PTHR34811:SF1">
    <property type="entry name" value="MATURASE K"/>
    <property type="match status" value="1"/>
</dbReference>
<dbReference type="Pfam" id="PF01348">
    <property type="entry name" value="Intron_maturas2"/>
    <property type="match status" value="1"/>
</dbReference>
<dbReference type="Pfam" id="PF01824">
    <property type="entry name" value="MatK_N"/>
    <property type="match status" value="1"/>
</dbReference>
<geneLocation type="chloroplast"/>
<gene>
    <name evidence="1" type="primary">matK</name>
</gene>
<reference key="1">
    <citation type="journal article" date="2005" name="Plant Syst. Evol.">
        <title>Relationships within Myrtaceae sensu lato based on a matK phylogeny.</title>
        <authorList>
            <person name="Wilson P.G."/>
            <person name="O'Brien M.M."/>
            <person name="Heslewood M.M."/>
            <person name="Quinn C.J."/>
        </authorList>
    </citation>
    <scope>NUCLEOTIDE SEQUENCE [GENOMIC DNA]</scope>
</reference>